<gene>
    <name evidence="9 11" type="primary">Taar8c</name>
</gene>
<organism>
    <name type="scientific">Mus musculus</name>
    <name type="common">Mouse</name>
    <dbReference type="NCBI Taxonomy" id="10090"/>
    <lineage>
        <taxon>Eukaryota</taxon>
        <taxon>Metazoa</taxon>
        <taxon>Chordata</taxon>
        <taxon>Craniata</taxon>
        <taxon>Vertebrata</taxon>
        <taxon>Euteleostomi</taxon>
        <taxon>Mammalia</taxon>
        <taxon>Eutheria</taxon>
        <taxon>Euarchontoglires</taxon>
        <taxon>Glires</taxon>
        <taxon>Rodentia</taxon>
        <taxon>Myomorpha</taxon>
        <taxon>Muroidea</taxon>
        <taxon>Muridae</taxon>
        <taxon>Murinae</taxon>
        <taxon>Mus</taxon>
        <taxon>Mus</taxon>
    </lineage>
</organism>
<sequence>MTSNFSQPALQLCYENTNGSCIKTPYSPGPRVILYMVYGFGAVLAVCGNLLVVISVLHFKQLHSPANFLIASLASADFLVGISVMPFSMVRSIESCWYFGDAFCSLHSCCDVAFCYSSALHLCFISVDRYIAVTDPLVYPTKFTVSVSGICISISWILPLVYSSAVFYTGISAKGIESLVSALNCVGGCQVVVNQDWVLISFLLFFIPTVVMIILYSKIFLVAKQQAVKIETSVSGNRGESSSESHKARVAKRERKAAKTLGVTVVAFMVSWLPYTIDALVDAFMGFITPAYVYEICCWSAYYNSAMNPLIYAFFYPWFRKAIKLILSGKILKGHSSTTNLFSE</sequence>
<comment type="function">
    <text evidence="7 10">Olfactory receptor specific for trace amines, such ascyclohexylamine (1-MPD) (PubMed:37225986). Trace amine compounds are enriched in animal body fluids and act on trace amine-associated receptors (TAARs) to elicit both intraspecific and interspecific innate behaviors (PubMed:37225986). Ligand-binding causes a conformation change that triggers signaling via G(s)-class of G alpha proteins (GNAL or GNAS) (Probable).</text>
</comment>
<comment type="subcellular location">
    <subcellularLocation>
        <location evidence="2">Cell membrane</location>
        <topology evidence="3">Multi-pass membrane protein</topology>
    </subcellularLocation>
</comment>
<comment type="tissue specificity">
    <text evidence="5">Specifically expressed in neurons of the olfactory epithelium.</text>
</comment>
<comment type="domain">
    <text evidence="1">In addition to the well known disulfide bond common to G-protein coupled receptor 1 family, trace amine-associated receptors (TAARs) contain an unique disulfide bond (Cys-21-Cys-185) connecting the N-terminus to the extracellular Loop 2 (ECL2), which is required for agonist-induced receptor activation.</text>
</comment>
<comment type="disruption phenotype">
    <text evidence="6">Mice lacking Taar2, Taar3, Taar4, Taar5, Taar6, Taar7a, Taar7b, Taar7d, Taar7e, Taar7f, Taar8a, Taar8b, Taar8c and Taar9 show no visible phenotype or behavioral deficits. They however show an absence of aversion to low concentrations of amines such as 2-phenylethylamine, isopentylamine, N-methylpiperidine and cadaverine.</text>
</comment>
<comment type="similarity">
    <text evidence="4">Belongs to the G-protein coupled receptor 1 family.</text>
</comment>
<dbReference type="EMBL" id="AY702339">
    <property type="protein sequence ID" value="AAV70148.1"/>
    <property type="molecule type" value="Genomic_DNA"/>
</dbReference>
<dbReference type="EMBL" id="BC139121">
    <property type="protein sequence ID" value="AAI39122.1"/>
    <property type="molecule type" value="mRNA"/>
</dbReference>
<dbReference type="EMBL" id="BC139122">
    <property type="protein sequence ID" value="AAI39123.1"/>
    <property type="molecule type" value="mRNA"/>
</dbReference>
<dbReference type="CCDS" id="CCDS23747.1"/>
<dbReference type="RefSeq" id="NP_001010840.1">
    <property type="nucleotide sequence ID" value="NM_001010840.2"/>
</dbReference>
<dbReference type="SMR" id="Q5QD05"/>
<dbReference type="FunCoup" id="Q5QD05">
    <property type="interactions" value="575"/>
</dbReference>
<dbReference type="STRING" id="10090.ENSMUSP00000133193"/>
<dbReference type="GlyCosmos" id="Q5QD05">
    <property type="glycosylation" value="2 sites, No reported glycans"/>
</dbReference>
<dbReference type="GlyGen" id="Q5QD05">
    <property type="glycosylation" value="2 sites"/>
</dbReference>
<dbReference type="PaxDb" id="10090-ENSMUSP00000133193"/>
<dbReference type="Ensembl" id="ENSMUST00000170267.3">
    <property type="protein sequence ID" value="ENSMUSP00000133193.2"/>
    <property type="gene ID" value="ENSMUSG00000100004.2"/>
</dbReference>
<dbReference type="GeneID" id="494546"/>
<dbReference type="KEGG" id="mmu:494546"/>
<dbReference type="UCSC" id="uc007eqq.2">
    <property type="organism name" value="mouse"/>
</dbReference>
<dbReference type="AGR" id="MGI:3527452"/>
<dbReference type="CTD" id="494546"/>
<dbReference type="MGI" id="MGI:3527452">
    <property type="gene designation" value="Taar8c"/>
</dbReference>
<dbReference type="VEuPathDB" id="HostDB:ENSMUSG00000100004"/>
<dbReference type="eggNOG" id="KOG3656">
    <property type="taxonomic scope" value="Eukaryota"/>
</dbReference>
<dbReference type="GeneTree" id="ENSGT00940000161306"/>
<dbReference type="HOGENOM" id="CLU_009579_11_0_1"/>
<dbReference type="InParanoid" id="Q5QD05"/>
<dbReference type="OMA" id="TICIFSE"/>
<dbReference type="OrthoDB" id="5959645at2759"/>
<dbReference type="PhylomeDB" id="Q5QD05"/>
<dbReference type="TreeFam" id="TF343107"/>
<dbReference type="Reactome" id="R-MMU-375280">
    <property type="pathway name" value="Amine ligand-binding receptors"/>
</dbReference>
<dbReference type="Reactome" id="R-MMU-418555">
    <property type="pathway name" value="G alpha (s) signalling events"/>
</dbReference>
<dbReference type="BioGRID-ORCS" id="494546">
    <property type="hits" value="2 hits in 43 CRISPR screens"/>
</dbReference>
<dbReference type="PRO" id="PR:Q5QD05"/>
<dbReference type="Proteomes" id="UP000000589">
    <property type="component" value="Chromosome 10"/>
</dbReference>
<dbReference type="RNAct" id="Q5QD05">
    <property type="molecule type" value="protein"/>
</dbReference>
<dbReference type="GO" id="GO:0005886">
    <property type="term" value="C:plasma membrane"/>
    <property type="evidence" value="ECO:0007669"/>
    <property type="project" value="UniProtKB-SubCell"/>
</dbReference>
<dbReference type="GO" id="GO:0001594">
    <property type="term" value="F:trace-amine receptor activity"/>
    <property type="evidence" value="ECO:0000314"/>
    <property type="project" value="UniProtKB"/>
</dbReference>
<dbReference type="CDD" id="cd15316">
    <property type="entry name" value="7tmA_TAAR6_8_9"/>
    <property type="match status" value="1"/>
</dbReference>
<dbReference type="FunFam" id="1.20.1070.10:FF:000030">
    <property type="entry name" value="trace amine-associated receptor 1"/>
    <property type="match status" value="1"/>
</dbReference>
<dbReference type="Gene3D" id="1.20.1070.10">
    <property type="entry name" value="Rhodopsin 7-helix transmembrane proteins"/>
    <property type="match status" value="1"/>
</dbReference>
<dbReference type="InterPro" id="IPR000276">
    <property type="entry name" value="GPCR_Rhodpsn"/>
</dbReference>
<dbReference type="InterPro" id="IPR017452">
    <property type="entry name" value="GPCR_Rhodpsn_7TM"/>
</dbReference>
<dbReference type="InterPro" id="IPR050569">
    <property type="entry name" value="TAAR"/>
</dbReference>
<dbReference type="InterPro" id="IPR009132">
    <property type="entry name" value="TAAR_fam"/>
</dbReference>
<dbReference type="PANTHER" id="PTHR24249">
    <property type="entry name" value="HISTAMINE RECEPTOR-RELATED G-PROTEIN COUPLED RECEPTOR"/>
    <property type="match status" value="1"/>
</dbReference>
<dbReference type="PANTHER" id="PTHR24249:SF405">
    <property type="entry name" value="TRACE AMINE-ASSOCIATED RECEPTOR 8"/>
    <property type="match status" value="1"/>
</dbReference>
<dbReference type="Pfam" id="PF00001">
    <property type="entry name" value="7tm_1"/>
    <property type="match status" value="1"/>
</dbReference>
<dbReference type="PRINTS" id="PR00237">
    <property type="entry name" value="GPCRRHODOPSN"/>
</dbReference>
<dbReference type="PRINTS" id="PR01830">
    <property type="entry name" value="TRACEAMINER"/>
</dbReference>
<dbReference type="SMART" id="SM01381">
    <property type="entry name" value="7TM_GPCR_Srsx"/>
    <property type="match status" value="1"/>
</dbReference>
<dbReference type="SUPFAM" id="SSF81321">
    <property type="entry name" value="Family A G protein-coupled receptor-like"/>
    <property type="match status" value="1"/>
</dbReference>
<dbReference type="PROSITE" id="PS00237">
    <property type="entry name" value="G_PROTEIN_RECEP_F1_1"/>
    <property type="match status" value="1"/>
</dbReference>
<dbReference type="PROSITE" id="PS50262">
    <property type="entry name" value="G_PROTEIN_RECEP_F1_2"/>
    <property type="match status" value="1"/>
</dbReference>
<accession>Q5QD05</accession>
<accession>B2RT38</accession>
<proteinExistence type="evidence at protein level"/>
<keyword id="KW-1003">Cell membrane</keyword>
<keyword id="KW-1015">Disulfide bond</keyword>
<keyword id="KW-0297">G-protein coupled receptor</keyword>
<keyword id="KW-0325">Glycoprotein</keyword>
<keyword id="KW-0472">Membrane</keyword>
<keyword id="KW-0675">Receptor</keyword>
<keyword id="KW-1185">Reference proteome</keyword>
<keyword id="KW-0807">Transducer</keyword>
<keyword id="KW-0812">Transmembrane</keyword>
<keyword id="KW-1133">Transmembrane helix</keyword>
<evidence type="ECO:0000250" key="1">
    <source>
        <dbReference type="UniProtKB" id="Q5QD04"/>
    </source>
</evidence>
<evidence type="ECO:0000250" key="2">
    <source>
        <dbReference type="UniProtKB" id="Q5QD06"/>
    </source>
</evidence>
<evidence type="ECO:0000255" key="3"/>
<evidence type="ECO:0000255" key="4">
    <source>
        <dbReference type="PROSITE-ProRule" id="PRU00521"/>
    </source>
</evidence>
<evidence type="ECO:0000269" key="5">
    <source>
    </source>
</evidence>
<evidence type="ECO:0000269" key="6">
    <source>
    </source>
</evidence>
<evidence type="ECO:0000269" key="7">
    <source>
    </source>
</evidence>
<evidence type="ECO:0000303" key="8">
    <source>
    </source>
</evidence>
<evidence type="ECO:0000303" key="9">
    <source>
    </source>
</evidence>
<evidence type="ECO:0000305" key="10"/>
<evidence type="ECO:0000312" key="11">
    <source>
        <dbReference type="MGI" id="MGI:3527452"/>
    </source>
</evidence>
<reference key="1">
    <citation type="journal article" date="2005" name="Genomics">
        <title>Trace amine-associated receptors form structurally and functionally distinct subfamilies of novel G protein-coupled receptors.</title>
        <authorList>
            <person name="Lindemann L."/>
            <person name="Ebeling M."/>
            <person name="Kratochwil N.A."/>
            <person name="Bunzow J.R."/>
            <person name="Grandy D.K."/>
            <person name="Hoener M.C."/>
        </authorList>
    </citation>
    <scope>NUCLEOTIDE SEQUENCE [GENOMIC DNA]</scope>
    <source>
        <strain>C57BL/6J</strain>
    </source>
</reference>
<reference key="2">
    <citation type="journal article" date="2004" name="Genome Res.">
        <title>The status, quality, and expansion of the NIH full-length cDNA project: the Mammalian Gene Collection (MGC).</title>
        <authorList>
            <consortium name="The MGC Project Team"/>
        </authorList>
    </citation>
    <scope>NUCLEOTIDE SEQUENCE [LARGE SCALE MRNA]</scope>
    <source>
        <tissue>Brain</tissue>
    </source>
</reference>
<reference key="3">
    <citation type="journal article" date="2006" name="Nature">
        <title>A second class of chemosensory receptors in the olfactory epithelium.</title>
        <authorList>
            <person name="Liberles S.D."/>
            <person name="Buck L.B."/>
        </authorList>
    </citation>
    <scope>TISSUE SPECIFICITY</scope>
</reference>
<reference key="4">
    <citation type="journal article" date="2013" name="Nature">
        <title>Non-redundant coding of aversive odours in the main olfactory pathway.</title>
        <authorList>
            <person name="Dewan A."/>
            <person name="Pacifico R."/>
            <person name="Zhan R."/>
            <person name="Rinberg D."/>
            <person name="Bozza T."/>
        </authorList>
    </citation>
    <scope>DISRUPTION PHENOTYPE</scope>
</reference>
<reference key="5">
    <citation type="journal article" date="2023" name="Nature">
        <title>Structural basis of amine odorant perception by a mammal olfactory receptor.</title>
        <authorList>
            <person name="Guo L."/>
            <person name="Cheng J."/>
            <person name="Lian S."/>
            <person name="Liu Q."/>
            <person name="Lu Y."/>
            <person name="Zheng Y."/>
            <person name="Zhu K."/>
            <person name="Zhang M."/>
            <person name="Kong Y."/>
            <person name="Zhang C."/>
            <person name="Rong N."/>
            <person name="Zhuang Y."/>
            <person name="Fang G."/>
            <person name="Jiang J."/>
            <person name="Zhang T."/>
            <person name="Han X."/>
            <person name="Liu Z."/>
            <person name="Xia M."/>
            <person name="Liu S."/>
            <person name="Zhang L."/>
            <person name="Liberles S.D."/>
            <person name="Yu X."/>
            <person name="Xu Y."/>
            <person name="Yang F."/>
            <person name="Li Q."/>
            <person name="Sun J.P."/>
        </authorList>
    </citation>
    <scope>FUNCTION</scope>
    <scope>DISULFIDE BOND</scope>
    <scope>MUTAGENESIS OF CYS-13; CYS-21; CYS-96; 108-SER--VAL-112; ASP-111; CYS-115; CYS-185; TRP-272 AND TYR-302</scope>
</reference>
<protein>
    <recommendedName>
        <fullName evidence="9">Trace amine-associated receptor 8c</fullName>
        <shortName evidence="8">TaR-8c</shortName>
        <shortName evidence="9">Trace amine receptor 8c</shortName>
        <shortName evidence="9">mTaar8c</shortName>
    </recommendedName>
</protein>
<feature type="chain" id="PRO_0000070179" description="Trace amine-associated receptor 8c">
    <location>
        <begin position="1"/>
        <end position="344"/>
    </location>
</feature>
<feature type="topological domain" description="Extracellular" evidence="3">
    <location>
        <begin position="1"/>
        <end position="31"/>
    </location>
</feature>
<feature type="transmembrane region" description="Helical; Name=1" evidence="3">
    <location>
        <begin position="32"/>
        <end position="52"/>
    </location>
</feature>
<feature type="topological domain" description="Cytoplasmic" evidence="3">
    <location>
        <begin position="53"/>
        <end position="67"/>
    </location>
</feature>
<feature type="transmembrane region" description="Helical; Name=2" evidence="3">
    <location>
        <begin position="68"/>
        <end position="88"/>
    </location>
</feature>
<feature type="topological domain" description="Extracellular" evidence="3">
    <location>
        <begin position="89"/>
        <end position="111"/>
    </location>
</feature>
<feature type="transmembrane region" description="Helical; Name=3" evidence="3">
    <location>
        <begin position="112"/>
        <end position="132"/>
    </location>
</feature>
<feature type="topological domain" description="Cytoplasmic" evidence="3">
    <location>
        <begin position="133"/>
        <end position="146"/>
    </location>
</feature>
<feature type="transmembrane region" description="Helical; Name=4" evidence="3">
    <location>
        <begin position="147"/>
        <end position="167"/>
    </location>
</feature>
<feature type="topological domain" description="Extracellular" evidence="3">
    <location>
        <begin position="168"/>
        <end position="195"/>
    </location>
</feature>
<feature type="transmembrane region" description="Helical; Name=5" evidence="3">
    <location>
        <begin position="196"/>
        <end position="216"/>
    </location>
</feature>
<feature type="topological domain" description="Cytoplasmic" evidence="3">
    <location>
        <begin position="217"/>
        <end position="260"/>
    </location>
</feature>
<feature type="transmembrane region" description="Helical; Name=6" evidence="3">
    <location>
        <begin position="261"/>
        <end position="281"/>
    </location>
</feature>
<feature type="topological domain" description="Extracellular" evidence="3">
    <location>
        <position position="282"/>
    </location>
</feature>
<feature type="transmembrane region" description="Helical; Name=7" evidence="3">
    <location>
        <begin position="283"/>
        <end position="303"/>
    </location>
</feature>
<feature type="topological domain" description="Cytoplasmic" evidence="3">
    <location>
        <begin position="304"/>
        <end position="344"/>
    </location>
</feature>
<feature type="glycosylation site" description="N-linked (GlcNAc...) asparagine" evidence="3">
    <location>
        <position position="4"/>
    </location>
</feature>
<feature type="glycosylation site" description="N-linked (GlcNAc...) asparagine" evidence="3">
    <location>
        <position position="18"/>
    </location>
</feature>
<feature type="disulfide bond" evidence="7">
    <location>
        <begin position="21"/>
        <end position="185"/>
    </location>
</feature>
<feature type="disulfide bond" evidence="4">
    <location>
        <begin position="104"/>
        <end position="189"/>
    </location>
</feature>
<feature type="mutagenesis site" description="Does not affect trace-amine receptor activity." evidence="7">
    <original>C</original>
    <variation>S</variation>
    <location>
        <position position="13"/>
    </location>
</feature>
<feature type="mutagenesis site" description="Decreased trace-amine receptor activity." evidence="7">
    <original>C</original>
    <variation>S</variation>
    <location>
        <position position="21"/>
    </location>
</feature>
<feature type="mutagenesis site" description="Does not affect trace-amine receptor activity." evidence="7">
    <original>C</original>
    <variation>S</variation>
    <location>
        <position position="96"/>
    </location>
</feature>
<feature type="mutagenesis site" description="Promotes trace-amine receptor activity toward polyamines, such as spermidine." evidence="7">
    <original>SCCDV</original>
    <variation>TCCDT</variation>
    <location>
        <begin position="108"/>
        <end position="112"/>
    </location>
</feature>
<feature type="mutagenesis site" description="Abolished trace-amine receptor activity." evidence="7">
    <original>D</original>
    <variation>A</variation>
    <location>
        <position position="111"/>
    </location>
</feature>
<feature type="mutagenesis site" description="Does not affect trace-amine receptor activity." evidence="7">
    <original>C</original>
    <variation>A</variation>
    <location>
        <position position="115"/>
    </location>
</feature>
<feature type="mutagenesis site" description="Decreased trace-amine receptor activity." evidence="7">
    <original>C</original>
    <variation>S</variation>
    <location>
        <position position="185"/>
    </location>
</feature>
<feature type="mutagenesis site" description="Abolished trace-amine receptor activity." evidence="7">
    <original>W</original>
    <variation>A</variation>
    <location>
        <position position="272"/>
    </location>
</feature>
<feature type="mutagenesis site" description="Abolished trace-amine receptor activity." evidence="7">
    <original>Y</original>
    <variation>A</variation>
    <location>
        <position position="302"/>
    </location>
</feature>
<name>TAA8C_MOUSE</name>